<accession>Q1JCQ6</accession>
<protein>
    <recommendedName>
        <fullName evidence="1">Nucleotide-binding protein MGAS2096_Spy0550</fullName>
    </recommendedName>
</protein>
<feature type="chain" id="PRO_0000259008" description="Nucleotide-binding protein MGAS2096_Spy0550">
    <location>
        <begin position="1"/>
        <end position="296"/>
    </location>
</feature>
<feature type="binding site" evidence="1">
    <location>
        <begin position="13"/>
        <end position="20"/>
    </location>
    <ligand>
        <name>ATP</name>
        <dbReference type="ChEBI" id="CHEBI:30616"/>
    </ligand>
</feature>
<feature type="binding site" evidence="1">
    <location>
        <begin position="63"/>
        <end position="66"/>
    </location>
    <ligand>
        <name>GTP</name>
        <dbReference type="ChEBI" id="CHEBI:37565"/>
    </ligand>
</feature>
<comment type="function">
    <text evidence="1">Displays ATPase and GTPase activities.</text>
</comment>
<comment type="similarity">
    <text evidence="1">Belongs to the RapZ-like family.</text>
</comment>
<organism>
    <name type="scientific">Streptococcus pyogenes serotype M12 (strain MGAS2096)</name>
    <dbReference type="NCBI Taxonomy" id="370553"/>
    <lineage>
        <taxon>Bacteria</taxon>
        <taxon>Bacillati</taxon>
        <taxon>Bacillota</taxon>
        <taxon>Bacilli</taxon>
        <taxon>Lactobacillales</taxon>
        <taxon>Streptococcaceae</taxon>
        <taxon>Streptococcus</taxon>
    </lineage>
</organism>
<keyword id="KW-0067">ATP-binding</keyword>
<keyword id="KW-0342">GTP-binding</keyword>
<keyword id="KW-0547">Nucleotide-binding</keyword>
<reference key="1">
    <citation type="journal article" date="2006" name="Proc. Natl. Acad. Sci. U.S.A.">
        <title>Molecular genetic anatomy of inter- and intraserotype variation in the human bacterial pathogen group A Streptococcus.</title>
        <authorList>
            <person name="Beres S.B."/>
            <person name="Richter E.W."/>
            <person name="Nagiec M.J."/>
            <person name="Sumby P."/>
            <person name="Porcella S.F."/>
            <person name="DeLeo F.R."/>
            <person name="Musser J.M."/>
        </authorList>
    </citation>
    <scope>NUCLEOTIDE SEQUENCE [LARGE SCALE GENOMIC DNA]</scope>
    <source>
        <strain>MGAS2096</strain>
    </source>
</reference>
<dbReference type="EMBL" id="CP000261">
    <property type="protein sequence ID" value="ABF35602.1"/>
    <property type="molecule type" value="Genomic_DNA"/>
</dbReference>
<dbReference type="SMR" id="Q1JCQ6"/>
<dbReference type="KEGG" id="spj:MGAS2096_Spy0550"/>
<dbReference type="HOGENOM" id="CLU_059558_0_0_9"/>
<dbReference type="GO" id="GO:0005524">
    <property type="term" value="F:ATP binding"/>
    <property type="evidence" value="ECO:0007669"/>
    <property type="project" value="UniProtKB-UniRule"/>
</dbReference>
<dbReference type="GO" id="GO:0005525">
    <property type="term" value="F:GTP binding"/>
    <property type="evidence" value="ECO:0007669"/>
    <property type="project" value="UniProtKB-UniRule"/>
</dbReference>
<dbReference type="Gene3D" id="3.40.50.300">
    <property type="entry name" value="P-loop containing nucleotide triphosphate hydrolases"/>
    <property type="match status" value="1"/>
</dbReference>
<dbReference type="HAMAP" id="MF_00636">
    <property type="entry name" value="RapZ_like"/>
    <property type="match status" value="1"/>
</dbReference>
<dbReference type="InterPro" id="IPR027417">
    <property type="entry name" value="P-loop_NTPase"/>
</dbReference>
<dbReference type="InterPro" id="IPR005337">
    <property type="entry name" value="RapZ-like"/>
</dbReference>
<dbReference type="InterPro" id="IPR053930">
    <property type="entry name" value="RapZ-like_N"/>
</dbReference>
<dbReference type="InterPro" id="IPR053931">
    <property type="entry name" value="RapZ_C"/>
</dbReference>
<dbReference type="NCBIfam" id="NF003828">
    <property type="entry name" value="PRK05416.1"/>
    <property type="match status" value="1"/>
</dbReference>
<dbReference type="PANTHER" id="PTHR30448">
    <property type="entry name" value="RNASE ADAPTER PROTEIN RAPZ"/>
    <property type="match status" value="1"/>
</dbReference>
<dbReference type="PANTHER" id="PTHR30448:SF0">
    <property type="entry name" value="RNASE ADAPTER PROTEIN RAPZ"/>
    <property type="match status" value="1"/>
</dbReference>
<dbReference type="Pfam" id="PF22740">
    <property type="entry name" value="PapZ_C"/>
    <property type="match status" value="1"/>
</dbReference>
<dbReference type="Pfam" id="PF03668">
    <property type="entry name" value="RapZ-like_N"/>
    <property type="match status" value="1"/>
</dbReference>
<dbReference type="PIRSF" id="PIRSF005052">
    <property type="entry name" value="P-loopkin"/>
    <property type="match status" value="1"/>
</dbReference>
<dbReference type="SUPFAM" id="SSF52540">
    <property type="entry name" value="P-loop containing nucleoside triphosphate hydrolases"/>
    <property type="match status" value="1"/>
</dbReference>
<name>Y550_STRPB</name>
<sequence>MSDKHINLVIVTGMSGAGKTVAIQSFEDLGYFTIDNMPPALVPKFLELIEQTNENRRVALVVDMRSRLFFKEINSTLDSIESNPSIDFRILFLDATDGELVSRYKETRRSHPLAADGRVLDGIRLERELLSPLKSMSQHVVDTTKLTPRQLRKTISDQFSEGSNQPSFRIEVMSFGFKYGLPLDADLVFDVRFLPNPYYQVELREKTGLDEDVFNYVMSHPESEVFYKHLLNLIVPILPAYQKEGKSVLTVAIGCTGGQHRSVAFAHCLAESLATDWSVNESHRDQNRRKETVNRS</sequence>
<evidence type="ECO:0000255" key="1">
    <source>
        <dbReference type="HAMAP-Rule" id="MF_00636"/>
    </source>
</evidence>
<proteinExistence type="inferred from homology"/>
<gene>
    <name type="ordered locus">MGAS2096_Spy0550</name>
</gene>